<feature type="chain" id="PRO_1000007906" description="Translation initiation factor 5A">
    <location>
        <begin position="1"/>
        <end position="136"/>
    </location>
</feature>
<feature type="modified residue" description="Hypusine" evidence="1">
    <location>
        <position position="36"/>
    </location>
</feature>
<accession>A2BNB6</accession>
<comment type="function">
    <text evidence="1">Functions by promoting the formation of the first peptide bond.</text>
</comment>
<comment type="subcellular location">
    <subcellularLocation>
        <location evidence="1">Cytoplasm</location>
    </subcellularLocation>
</comment>
<comment type="similarity">
    <text evidence="1">Belongs to the eIF-5A family.</text>
</comment>
<protein>
    <recommendedName>
        <fullName evidence="1">Translation initiation factor 5A</fullName>
    </recommendedName>
    <alternativeName>
        <fullName evidence="1">Hypusine-containing protein</fullName>
    </alternativeName>
    <alternativeName>
        <fullName evidence="1">eIF-5A</fullName>
    </alternativeName>
</protein>
<gene>
    <name type="primary">eIF5A</name>
    <name type="ordered locus">Hbut_1663</name>
</gene>
<dbReference type="EMBL" id="CP000493">
    <property type="protein sequence ID" value="ABM81477.1"/>
    <property type="molecule type" value="Genomic_DNA"/>
</dbReference>
<dbReference type="RefSeq" id="WP_011822795.1">
    <property type="nucleotide sequence ID" value="NC_008818.1"/>
</dbReference>
<dbReference type="SMR" id="A2BNB6"/>
<dbReference type="STRING" id="415426.Hbut_1663"/>
<dbReference type="EnsemblBacteria" id="ABM81477">
    <property type="protein sequence ID" value="ABM81477"/>
    <property type="gene ID" value="Hbut_1663"/>
</dbReference>
<dbReference type="GeneID" id="4782642"/>
<dbReference type="KEGG" id="hbu:Hbut_1663"/>
<dbReference type="eggNOG" id="arCOG04277">
    <property type="taxonomic scope" value="Archaea"/>
</dbReference>
<dbReference type="HOGENOM" id="CLU_102600_3_0_2"/>
<dbReference type="OrthoDB" id="23689at2157"/>
<dbReference type="Proteomes" id="UP000002593">
    <property type="component" value="Chromosome"/>
</dbReference>
<dbReference type="GO" id="GO:0005737">
    <property type="term" value="C:cytoplasm"/>
    <property type="evidence" value="ECO:0007669"/>
    <property type="project" value="UniProtKB-SubCell"/>
</dbReference>
<dbReference type="GO" id="GO:0043022">
    <property type="term" value="F:ribosome binding"/>
    <property type="evidence" value="ECO:0007669"/>
    <property type="project" value="InterPro"/>
</dbReference>
<dbReference type="GO" id="GO:0003723">
    <property type="term" value="F:RNA binding"/>
    <property type="evidence" value="ECO:0007669"/>
    <property type="project" value="InterPro"/>
</dbReference>
<dbReference type="GO" id="GO:0003746">
    <property type="term" value="F:translation elongation factor activity"/>
    <property type="evidence" value="ECO:0007669"/>
    <property type="project" value="InterPro"/>
</dbReference>
<dbReference type="GO" id="GO:0003743">
    <property type="term" value="F:translation initiation factor activity"/>
    <property type="evidence" value="ECO:0007669"/>
    <property type="project" value="UniProtKB-UniRule"/>
</dbReference>
<dbReference type="GO" id="GO:0045901">
    <property type="term" value="P:positive regulation of translational elongation"/>
    <property type="evidence" value="ECO:0007669"/>
    <property type="project" value="InterPro"/>
</dbReference>
<dbReference type="GO" id="GO:0045905">
    <property type="term" value="P:positive regulation of translational termination"/>
    <property type="evidence" value="ECO:0007669"/>
    <property type="project" value="InterPro"/>
</dbReference>
<dbReference type="CDD" id="cd04467">
    <property type="entry name" value="S1_aIF5A"/>
    <property type="match status" value="1"/>
</dbReference>
<dbReference type="FunFam" id="2.40.50.140:FF:000334">
    <property type="entry name" value="Translation initiation factor 5A"/>
    <property type="match status" value="1"/>
</dbReference>
<dbReference type="Gene3D" id="2.30.30.30">
    <property type="match status" value="1"/>
</dbReference>
<dbReference type="Gene3D" id="2.40.50.140">
    <property type="entry name" value="Nucleic acid-binding proteins"/>
    <property type="match status" value="1"/>
</dbReference>
<dbReference type="HAMAP" id="MF_00085">
    <property type="entry name" value="eIF_5A"/>
    <property type="match status" value="1"/>
</dbReference>
<dbReference type="InterPro" id="IPR001884">
    <property type="entry name" value="IF5A-like"/>
</dbReference>
<dbReference type="InterPro" id="IPR048670">
    <property type="entry name" value="IF5A-like_N"/>
</dbReference>
<dbReference type="InterPro" id="IPR012340">
    <property type="entry name" value="NA-bd_OB-fold"/>
</dbReference>
<dbReference type="InterPro" id="IPR014722">
    <property type="entry name" value="Rib_uL2_dom2"/>
</dbReference>
<dbReference type="InterPro" id="IPR019769">
    <property type="entry name" value="Trans_elong_IF5A_hypusine_site"/>
</dbReference>
<dbReference type="InterPro" id="IPR022847">
    <property type="entry name" value="Transl_elong_IF5A_arc"/>
</dbReference>
<dbReference type="InterPro" id="IPR020189">
    <property type="entry name" value="Transl_elong_IF5A_C"/>
</dbReference>
<dbReference type="InterPro" id="IPR008991">
    <property type="entry name" value="Translation_prot_SH3-like_sf"/>
</dbReference>
<dbReference type="NCBIfam" id="TIGR00037">
    <property type="entry name" value="eIF_5A"/>
    <property type="match status" value="1"/>
</dbReference>
<dbReference type="NCBIfam" id="NF003076">
    <property type="entry name" value="PRK03999.1"/>
    <property type="match status" value="1"/>
</dbReference>
<dbReference type="PANTHER" id="PTHR11673">
    <property type="entry name" value="TRANSLATION INITIATION FACTOR 5A FAMILY MEMBER"/>
    <property type="match status" value="1"/>
</dbReference>
<dbReference type="Pfam" id="PF01287">
    <property type="entry name" value="eIF-5a"/>
    <property type="match status" value="1"/>
</dbReference>
<dbReference type="Pfam" id="PF21485">
    <property type="entry name" value="IF5A-like_N"/>
    <property type="match status" value="1"/>
</dbReference>
<dbReference type="PIRSF" id="PIRSF003025">
    <property type="entry name" value="eIF5A"/>
    <property type="match status" value="1"/>
</dbReference>
<dbReference type="SMART" id="SM01376">
    <property type="entry name" value="eIF-5a"/>
    <property type="match status" value="1"/>
</dbReference>
<dbReference type="SUPFAM" id="SSF50249">
    <property type="entry name" value="Nucleic acid-binding proteins"/>
    <property type="match status" value="1"/>
</dbReference>
<dbReference type="SUPFAM" id="SSF50104">
    <property type="entry name" value="Translation proteins SH3-like domain"/>
    <property type="match status" value="1"/>
</dbReference>
<dbReference type="PROSITE" id="PS00302">
    <property type="entry name" value="IF5A_HYPUSINE"/>
    <property type="match status" value="1"/>
</dbReference>
<evidence type="ECO:0000255" key="1">
    <source>
        <dbReference type="HAMAP-Rule" id="MF_00085"/>
    </source>
</evidence>
<sequence length="136" mass="15038">MSVTYATLGELKVGSYIVIDGEPCRIVEMSKAKTGKHGSAKAHVVAVCLFSGNKKTLTAPVDARVEVPIIDKRIGQVIADMGDMVQIMDMETYETFEVEKPKDEDLKSKLQPGVEVEYWVVMGRYMITRVRGAPKS</sequence>
<organism>
    <name type="scientific">Hyperthermus butylicus (strain DSM 5456 / JCM 9403 / PLM1-5)</name>
    <dbReference type="NCBI Taxonomy" id="415426"/>
    <lineage>
        <taxon>Archaea</taxon>
        <taxon>Thermoproteota</taxon>
        <taxon>Thermoprotei</taxon>
        <taxon>Desulfurococcales</taxon>
        <taxon>Pyrodictiaceae</taxon>
        <taxon>Hyperthermus</taxon>
    </lineage>
</organism>
<keyword id="KW-0963">Cytoplasm</keyword>
<keyword id="KW-0385">Hypusine</keyword>
<keyword id="KW-0396">Initiation factor</keyword>
<keyword id="KW-0648">Protein biosynthesis</keyword>
<keyword id="KW-1185">Reference proteome</keyword>
<reference key="1">
    <citation type="journal article" date="2007" name="Archaea">
        <title>The genome of Hyperthermus butylicus: a sulfur-reducing, peptide fermenting, neutrophilic Crenarchaeote growing up to 108 degrees C.</title>
        <authorList>
            <person name="Bruegger K."/>
            <person name="Chen L."/>
            <person name="Stark M."/>
            <person name="Zibat A."/>
            <person name="Redder P."/>
            <person name="Ruepp A."/>
            <person name="Awayez M."/>
            <person name="She Q."/>
            <person name="Garrett R.A."/>
            <person name="Klenk H.-P."/>
        </authorList>
    </citation>
    <scope>NUCLEOTIDE SEQUENCE [LARGE SCALE GENOMIC DNA]</scope>
    <source>
        <strain>DSM 5456 / JCM 9403 / PLM1-5</strain>
    </source>
</reference>
<proteinExistence type="inferred from homology"/>
<name>IF5A_HYPBU</name>